<name>LYSY_PYRCJ</name>
<feature type="chain" id="PRO_1000076738" description="Putative [LysW]-L-2-aminoadipate/[LysW]-L-glutamate phosphate reductase">
    <location>
        <begin position="1"/>
        <end position="351"/>
    </location>
</feature>
<feature type="active site" evidence="1">
    <location>
        <position position="151"/>
    </location>
</feature>
<feature type="binding site" evidence="1">
    <location>
        <begin position="10"/>
        <end position="13"/>
    </location>
    <ligand>
        <name>NADP(+)</name>
        <dbReference type="ChEBI" id="CHEBI:58349"/>
    </ligand>
</feature>
<feature type="binding site" evidence="1">
    <location>
        <begin position="34"/>
        <end position="36"/>
    </location>
    <ligand>
        <name>NADP(+)</name>
        <dbReference type="ChEBI" id="CHEBI:58349"/>
    </ligand>
</feature>
<feature type="binding site" evidence="1">
    <location>
        <position position="318"/>
    </location>
    <ligand>
        <name>NADP(+)</name>
        <dbReference type="ChEBI" id="CHEBI:58349"/>
    </ligand>
</feature>
<sequence length="351" mass="38774">MKRVCIVGASGFTGGELLRILLQHSGVEVVCATSRKFKGEYVYRVHPNLRGFTQLKFVEPTIDAALKADVVFLALPHGESVKWVPQLYESGVAVFDLSADFRLKDPNAYVEWYKWPQPHPYPDLLAKAVYGQPELHREELVGARLVAVPGCMATASILMLAPLAKFGLISAPPVVDAKIGSSGAGAEGSVVDLHSFRTYVVRPYEPVHHRHIAEIEQELSRLAGKEVKVAFTPHAVDIVRGIFTTGHVFVEKMPTEADLWKYYRALFGDSKFIRIVKDRLGISRYPNVKYVLGSNLVDLGFELDARMKRVVTFAAIDNLVRGAAGQAVQAFNIAMGFPEDEGLRHIPVAPI</sequence>
<evidence type="ECO:0000255" key="1">
    <source>
        <dbReference type="HAMAP-Rule" id="MF_02083"/>
    </source>
</evidence>
<comment type="function">
    <text evidence="1">Involved in both the arginine and lysine biosynthetic pathways.</text>
</comment>
<comment type="catalytic activity">
    <reaction evidence="1">
        <text>[amino-group carrier protein]-C-terminal-N-(1-carboxy-5-oxopentan-1-yl)-L-glutamine + phosphate + NADP(+) = [amino-group carrier protein]-C-terminal-N-(1-carboxy-5-phosphooxy-5-oxopentan-1-yl)-L-glutamine + NADPH + H(+)</text>
        <dbReference type="Rhea" id="RHEA:41948"/>
        <dbReference type="Rhea" id="RHEA-COMP:9712"/>
        <dbReference type="Rhea" id="RHEA-COMP:9714"/>
        <dbReference type="ChEBI" id="CHEBI:15378"/>
        <dbReference type="ChEBI" id="CHEBI:43474"/>
        <dbReference type="ChEBI" id="CHEBI:57783"/>
        <dbReference type="ChEBI" id="CHEBI:58349"/>
        <dbReference type="ChEBI" id="CHEBI:78499"/>
        <dbReference type="ChEBI" id="CHEBI:78501"/>
        <dbReference type="EC" id="1.2.1.103"/>
    </reaction>
</comment>
<comment type="catalytic activity">
    <reaction evidence="1">
        <text>[amino-group carrier protein]-C-terminal-gamma-(L-glutamyl-5-semialdehyde)-L-glutamate + phosphate + NADP(+) = [amino-group carrier protein]-C-terminal-gamma-(5-phospho-L-glutamyl)-L-glutamate + NADPH + H(+)</text>
        <dbReference type="Rhea" id="RHEA:52668"/>
        <dbReference type="Rhea" id="RHEA-COMP:13313"/>
        <dbReference type="Rhea" id="RHEA-COMP:13327"/>
        <dbReference type="ChEBI" id="CHEBI:15378"/>
        <dbReference type="ChEBI" id="CHEBI:43474"/>
        <dbReference type="ChEBI" id="CHEBI:57783"/>
        <dbReference type="ChEBI" id="CHEBI:58349"/>
        <dbReference type="ChEBI" id="CHEBI:136717"/>
        <dbReference type="ChEBI" id="CHEBI:136761"/>
        <dbReference type="EC" id="1.2.1.106"/>
    </reaction>
</comment>
<comment type="pathway">
    <text evidence="1">Amino-acid biosynthesis; L-lysine biosynthesis via AAA pathway; L-lysine from L-alpha-aminoadipate (Thermus route): step 3/5.</text>
</comment>
<comment type="pathway">
    <text evidence="1">Amino-acid biosynthesis; L-arginine biosynthesis.</text>
</comment>
<comment type="subcellular location">
    <subcellularLocation>
        <location evidence="1">Cytoplasm</location>
    </subcellularLocation>
</comment>
<comment type="similarity">
    <text evidence="1">Belongs to the NAGSA dehydrogenase family. Type 1 subfamily. LysY sub-subfamily.</text>
</comment>
<organism>
    <name type="scientific">Pyrobaculum calidifontis (strain DSM 21063 / JCM 11548 / VA1)</name>
    <dbReference type="NCBI Taxonomy" id="410359"/>
    <lineage>
        <taxon>Archaea</taxon>
        <taxon>Thermoproteota</taxon>
        <taxon>Thermoprotei</taxon>
        <taxon>Thermoproteales</taxon>
        <taxon>Thermoproteaceae</taxon>
        <taxon>Pyrobaculum</taxon>
    </lineage>
</organism>
<proteinExistence type="inferred from homology"/>
<gene>
    <name evidence="1" type="primary">lysY</name>
    <name type="ordered locus">Pcal_0373</name>
</gene>
<reference key="1">
    <citation type="submission" date="2007-02" db="EMBL/GenBank/DDBJ databases">
        <title>Complete sequence of Pyrobaculum calidifontis JCM 11548.</title>
        <authorList>
            <consortium name="US DOE Joint Genome Institute"/>
            <person name="Copeland A."/>
            <person name="Lucas S."/>
            <person name="Lapidus A."/>
            <person name="Barry K."/>
            <person name="Glavina del Rio T."/>
            <person name="Dalin E."/>
            <person name="Tice H."/>
            <person name="Pitluck S."/>
            <person name="Chain P."/>
            <person name="Malfatti S."/>
            <person name="Shin M."/>
            <person name="Vergez L."/>
            <person name="Schmutz J."/>
            <person name="Larimer F."/>
            <person name="Land M."/>
            <person name="Hauser L."/>
            <person name="Kyrpides N."/>
            <person name="Mikhailova N."/>
            <person name="Cozen A.E."/>
            <person name="Fitz-Gibbon S.T."/>
            <person name="House C.H."/>
            <person name="Saltikov C."/>
            <person name="Lowe T.M."/>
            <person name="Richardson P."/>
        </authorList>
    </citation>
    <scope>NUCLEOTIDE SEQUENCE [LARGE SCALE GENOMIC DNA]</scope>
    <source>
        <strain>DSM 21063 / JCM 11548 / VA1</strain>
    </source>
</reference>
<accession>A3MT41</accession>
<dbReference type="EC" id="1.2.1.103" evidence="1"/>
<dbReference type="EC" id="1.2.1.106" evidence="1"/>
<dbReference type="EMBL" id="CP000561">
    <property type="protein sequence ID" value="ABO07808.1"/>
    <property type="molecule type" value="Genomic_DNA"/>
</dbReference>
<dbReference type="RefSeq" id="WP_011849065.1">
    <property type="nucleotide sequence ID" value="NC_009073.1"/>
</dbReference>
<dbReference type="SMR" id="A3MT41"/>
<dbReference type="STRING" id="410359.Pcal_0373"/>
<dbReference type="GeneID" id="4908686"/>
<dbReference type="KEGG" id="pcl:Pcal_0373"/>
<dbReference type="eggNOG" id="arCOG00495">
    <property type="taxonomic scope" value="Archaea"/>
</dbReference>
<dbReference type="HOGENOM" id="CLU_006384_0_1_2"/>
<dbReference type="OrthoDB" id="372053at2157"/>
<dbReference type="UniPathway" id="UPA00033">
    <property type="reaction ID" value="UER00037"/>
</dbReference>
<dbReference type="UniPathway" id="UPA00068"/>
<dbReference type="Proteomes" id="UP000001431">
    <property type="component" value="Chromosome"/>
</dbReference>
<dbReference type="GO" id="GO:0005737">
    <property type="term" value="C:cytoplasm"/>
    <property type="evidence" value="ECO:0007669"/>
    <property type="project" value="UniProtKB-SubCell"/>
</dbReference>
<dbReference type="GO" id="GO:0043870">
    <property type="term" value="F:N-acetyl-gamma-aminoadipyl-phosphate reductase activity"/>
    <property type="evidence" value="ECO:0007669"/>
    <property type="project" value="RHEA"/>
</dbReference>
<dbReference type="GO" id="GO:0003942">
    <property type="term" value="F:N-acetyl-gamma-glutamyl-phosphate reductase activity"/>
    <property type="evidence" value="ECO:0007669"/>
    <property type="project" value="InterPro"/>
</dbReference>
<dbReference type="GO" id="GO:0051287">
    <property type="term" value="F:NAD binding"/>
    <property type="evidence" value="ECO:0007669"/>
    <property type="project" value="InterPro"/>
</dbReference>
<dbReference type="GO" id="GO:0070401">
    <property type="term" value="F:NADP+ binding"/>
    <property type="evidence" value="ECO:0007669"/>
    <property type="project" value="InterPro"/>
</dbReference>
<dbReference type="GO" id="GO:0042450">
    <property type="term" value="P:arginine biosynthetic process via ornithine"/>
    <property type="evidence" value="ECO:0007669"/>
    <property type="project" value="UniProtKB-UniRule"/>
</dbReference>
<dbReference type="GO" id="GO:0006526">
    <property type="term" value="P:L-arginine biosynthetic process"/>
    <property type="evidence" value="ECO:0007669"/>
    <property type="project" value="UniProtKB-UniPathway"/>
</dbReference>
<dbReference type="GO" id="GO:0019878">
    <property type="term" value="P:lysine biosynthetic process via aminoadipic acid"/>
    <property type="evidence" value="ECO:0007669"/>
    <property type="project" value="UniProtKB-UniRule"/>
</dbReference>
<dbReference type="CDD" id="cd23939">
    <property type="entry name" value="AGPR_1_C_LysY"/>
    <property type="match status" value="1"/>
</dbReference>
<dbReference type="CDD" id="cd17895">
    <property type="entry name" value="AGPR_1_N"/>
    <property type="match status" value="1"/>
</dbReference>
<dbReference type="Gene3D" id="3.30.360.10">
    <property type="entry name" value="Dihydrodipicolinate Reductase, domain 2"/>
    <property type="match status" value="1"/>
</dbReference>
<dbReference type="Gene3D" id="3.40.50.720">
    <property type="entry name" value="NAD(P)-binding Rossmann-like Domain"/>
    <property type="match status" value="1"/>
</dbReference>
<dbReference type="HAMAP" id="MF_00150">
    <property type="entry name" value="ArgC_type1"/>
    <property type="match status" value="1"/>
</dbReference>
<dbReference type="HAMAP" id="MF_02083">
    <property type="entry name" value="LysY"/>
    <property type="match status" value="1"/>
</dbReference>
<dbReference type="InterPro" id="IPR000706">
    <property type="entry name" value="AGPR_type-1"/>
</dbReference>
<dbReference type="InterPro" id="IPR037535">
    <property type="entry name" value="LysY"/>
</dbReference>
<dbReference type="InterPro" id="IPR036291">
    <property type="entry name" value="NAD(P)-bd_dom_sf"/>
</dbReference>
<dbReference type="InterPro" id="IPR050085">
    <property type="entry name" value="NAGSA_dehydrogenase"/>
</dbReference>
<dbReference type="InterPro" id="IPR000534">
    <property type="entry name" value="Semialdehyde_DH_NAD-bd"/>
</dbReference>
<dbReference type="NCBIfam" id="TIGR01850">
    <property type="entry name" value="argC"/>
    <property type="match status" value="1"/>
</dbReference>
<dbReference type="PANTHER" id="PTHR32338:SF11">
    <property type="entry name" value="[LYSW]-L-2-AMINOADIPATE_[LYSW]-L-GLUTAMATE PHOSPHATE REDUCTASE-RELATED"/>
    <property type="match status" value="1"/>
</dbReference>
<dbReference type="PANTHER" id="PTHR32338">
    <property type="entry name" value="N-ACETYL-GAMMA-GLUTAMYL-PHOSPHATE REDUCTASE, CHLOROPLASTIC-RELATED-RELATED"/>
    <property type="match status" value="1"/>
</dbReference>
<dbReference type="Pfam" id="PF01118">
    <property type="entry name" value="Semialdhyde_dh"/>
    <property type="match status" value="1"/>
</dbReference>
<dbReference type="Pfam" id="PF22698">
    <property type="entry name" value="Semialdhyde_dhC_1"/>
    <property type="match status" value="1"/>
</dbReference>
<dbReference type="SMART" id="SM00859">
    <property type="entry name" value="Semialdhyde_dh"/>
    <property type="match status" value="1"/>
</dbReference>
<dbReference type="SUPFAM" id="SSF55347">
    <property type="entry name" value="Glyceraldehyde-3-phosphate dehydrogenase-like, C-terminal domain"/>
    <property type="match status" value="1"/>
</dbReference>
<dbReference type="SUPFAM" id="SSF51735">
    <property type="entry name" value="NAD(P)-binding Rossmann-fold domains"/>
    <property type="match status" value="1"/>
</dbReference>
<protein>
    <recommendedName>
        <fullName evidence="1">Putative [LysW]-L-2-aminoadipate/[LysW]-L-glutamate phosphate reductase</fullName>
        <ecNumber evidence="1">1.2.1.103</ecNumber>
        <ecNumber evidence="1">1.2.1.106</ecNumber>
    </recommendedName>
</protein>
<keyword id="KW-0028">Amino-acid biosynthesis</keyword>
<keyword id="KW-0055">Arginine biosynthesis</keyword>
<keyword id="KW-0963">Cytoplasm</keyword>
<keyword id="KW-0457">Lysine biosynthesis</keyword>
<keyword id="KW-0521">NADP</keyword>
<keyword id="KW-0560">Oxidoreductase</keyword>